<accession>P15684</accession>
<accession>Q9JHP4</accession>
<reference key="1">
    <citation type="journal article" date="1989" name="J. Biol. Chem.">
        <title>Amino acid sequence deduced from a rat kidney cDNA suggests it encodes the Zn-peptidase aminopeptidase N.</title>
        <authorList>
            <person name="Watt V.M."/>
            <person name="Yip C.C."/>
        </authorList>
    </citation>
    <scope>NUCLEOTIDE SEQUENCE [MRNA]</scope>
    <scope>SUBCELLULAR LOCATION</scope>
    <scope>TISSUE SPECIFICITY</scope>
    <source>
        <tissue>Kidney</tissue>
    </source>
</reference>
<reference key="2">
    <citation type="journal article" date="1989" name="Biochem. Biophys. Res. Commun.">
        <title>Molecular cloning and amino acid sequence of rat kidney aminopeptidase M: a member of a super family of zinc-metallohydrolases.</title>
        <authorList>
            <person name="Malfroy B."/>
            <person name="Kado-Fong H."/>
            <person name="Gros C."/>
            <person name="Giros B."/>
            <person name="Schwartz J.C."/>
            <person name="Hellmiss R."/>
        </authorList>
    </citation>
    <scope>NUCLEOTIDE SEQUENCE [MRNA]</scope>
    <source>
        <tissue>Kidney</tissue>
    </source>
</reference>
<reference key="3">
    <citation type="submission" date="2000-06" db="EMBL/GenBank/DDBJ databases">
        <authorList>
            <person name="Gal-Gaber O."/>
        </authorList>
    </citation>
    <scope>NUCLEOTIDE SEQUENCE [MRNA] OF 198-754</scope>
</reference>
<reference key="4">
    <citation type="journal article" date="1991" name="Am. J. Physiol.">
        <title>p146 type II alveolar epithelial cell antigen is identical to aminopeptidase N.</title>
        <authorList>
            <person name="Funkhouser J.D."/>
            <person name="Tangada S.D."/>
            <person name="Jones M."/>
            <person name="O S.J."/>
            <person name="Peterson R.D."/>
        </authorList>
    </citation>
    <scope>PROTEIN SEQUENCE OF 2-19; 68-84; 206-215; 286-299 AND 364-371</scope>
</reference>
<reference key="5">
    <citation type="journal article" date="2001" name="Neuroscience">
        <title>First discrete autoradiographic distribution of aminopeptidase N in various structures of rat brain and spinal cord using the selective iodinated inhibitor 125IRB 129.</title>
        <authorList>
            <person name="Noble F."/>
            <person name="Banisadr G."/>
            <person name="Jardinaud F."/>
            <person name="Popovici T."/>
            <person name="Lai-Kuen R."/>
            <person name="Chen H."/>
            <person name="Bischoff L."/>
            <person name="Parsadaniantz S.M."/>
            <person name="Fournie-Zaluski M.-C."/>
            <person name="Roques B.P."/>
        </authorList>
    </citation>
    <scope>TISSUE SPECIFICITY</scope>
</reference>
<organism>
    <name type="scientific">Rattus norvegicus</name>
    <name type="common">Rat</name>
    <dbReference type="NCBI Taxonomy" id="10116"/>
    <lineage>
        <taxon>Eukaryota</taxon>
        <taxon>Metazoa</taxon>
        <taxon>Chordata</taxon>
        <taxon>Craniata</taxon>
        <taxon>Vertebrata</taxon>
        <taxon>Euteleostomi</taxon>
        <taxon>Mammalia</taxon>
        <taxon>Eutheria</taxon>
        <taxon>Euarchontoglires</taxon>
        <taxon>Glires</taxon>
        <taxon>Rodentia</taxon>
        <taxon>Myomorpha</taxon>
        <taxon>Muroidea</taxon>
        <taxon>Muridae</taxon>
        <taxon>Murinae</taxon>
        <taxon>Rattus</taxon>
    </lineage>
</organism>
<dbReference type="EC" id="3.4.11.2" evidence="1"/>
<dbReference type="EMBL" id="M25073">
    <property type="protein sequence ID" value="AAA41502.1"/>
    <property type="molecule type" value="mRNA"/>
</dbReference>
<dbReference type="EMBL" id="M26710">
    <property type="protein sequence ID" value="AAA57129.1"/>
    <property type="molecule type" value="mRNA"/>
</dbReference>
<dbReference type="EMBL" id="Y18765">
    <property type="protein sequence ID" value="CAB93958.1"/>
    <property type="molecule type" value="mRNA"/>
</dbReference>
<dbReference type="PIR" id="A32852">
    <property type="entry name" value="A32852"/>
</dbReference>
<dbReference type="RefSeq" id="NP_112274.1">
    <property type="nucleotide sequence ID" value="NM_031012.1"/>
</dbReference>
<dbReference type="SMR" id="P15684"/>
<dbReference type="BioGRID" id="249541">
    <property type="interactions" value="3"/>
</dbReference>
<dbReference type="FunCoup" id="P15684">
    <property type="interactions" value="619"/>
</dbReference>
<dbReference type="IntAct" id="P15684">
    <property type="interactions" value="1"/>
</dbReference>
<dbReference type="STRING" id="10116.ENSRNOP00000069456"/>
<dbReference type="BindingDB" id="P15684"/>
<dbReference type="ChEMBL" id="CHEMBL3259"/>
<dbReference type="DrugCentral" id="P15684"/>
<dbReference type="MEROPS" id="M01.001"/>
<dbReference type="GlyCosmos" id="P15684">
    <property type="glycosylation" value="9 sites, No reported glycans"/>
</dbReference>
<dbReference type="GlyGen" id="P15684">
    <property type="glycosylation" value="9 sites"/>
</dbReference>
<dbReference type="iPTMnet" id="P15684"/>
<dbReference type="PhosphoSitePlus" id="P15684"/>
<dbReference type="PaxDb" id="10116-ENSRNOP00000020002"/>
<dbReference type="GeneID" id="81641"/>
<dbReference type="KEGG" id="rno:81641"/>
<dbReference type="UCSC" id="RGD:2991">
    <property type="organism name" value="rat"/>
</dbReference>
<dbReference type="AGR" id="RGD:2991"/>
<dbReference type="CTD" id="290"/>
<dbReference type="RGD" id="2991">
    <property type="gene designation" value="Anpep"/>
</dbReference>
<dbReference type="eggNOG" id="KOG1046">
    <property type="taxonomic scope" value="Eukaryota"/>
</dbReference>
<dbReference type="InParanoid" id="P15684"/>
<dbReference type="OrthoDB" id="510539at2759"/>
<dbReference type="PhylomeDB" id="P15684"/>
<dbReference type="BioCyc" id="MetaCyc:MONOMER-9982"/>
<dbReference type="BRENDA" id="3.4.11.2">
    <property type="organism ID" value="5301"/>
</dbReference>
<dbReference type="BRENDA" id="3.4.11.7">
    <property type="organism ID" value="5301"/>
</dbReference>
<dbReference type="Reactome" id="R-RNO-6798695">
    <property type="pathway name" value="Neutrophil degranulation"/>
</dbReference>
<dbReference type="SABIO-RK" id="P15684"/>
<dbReference type="PRO" id="PR:P15684"/>
<dbReference type="Proteomes" id="UP000002494">
    <property type="component" value="Unplaced"/>
</dbReference>
<dbReference type="GO" id="GO:0031526">
    <property type="term" value="C:brush border membrane"/>
    <property type="evidence" value="ECO:0000314"/>
    <property type="project" value="RGD"/>
</dbReference>
<dbReference type="GO" id="GO:0005737">
    <property type="term" value="C:cytoplasm"/>
    <property type="evidence" value="ECO:0000318"/>
    <property type="project" value="GO_Central"/>
</dbReference>
<dbReference type="GO" id="GO:0005793">
    <property type="term" value="C:endoplasmic reticulum-Golgi intermediate compartment"/>
    <property type="evidence" value="ECO:0000266"/>
    <property type="project" value="RGD"/>
</dbReference>
<dbReference type="GO" id="GO:0009897">
    <property type="term" value="C:external side of plasma membrane"/>
    <property type="evidence" value="ECO:0000266"/>
    <property type="project" value="RGD"/>
</dbReference>
<dbReference type="GO" id="GO:0070062">
    <property type="term" value="C:extracellular exosome"/>
    <property type="evidence" value="ECO:0000266"/>
    <property type="project" value="RGD"/>
</dbReference>
<dbReference type="GO" id="GO:0005615">
    <property type="term" value="C:extracellular space"/>
    <property type="evidence" value="ECO:0000266"/>
    <property type="project" value="RGD"/>
</dbReference>
<dbReference type="GO" id="GO:0005886">
    <property type="term" value="C:plasma membrane"/>
    <property type="evidence" value="ECO:0000250"/>
    <property type="project" value="UniProtKB"/>
</dbReference>
<dbReference type="GO" id="GO:0016285">
    <property type="term" value="F:alanyl aminopeptidase activity"/>
    <property type="evidence" value="ECO:0007669"/>
    <property type="project" value="UniProtKB-EC"/>
</dbReference>
<dbReference type="GO" id="GO:0004177">
    <property type="term" value="F:aminopeptidase activity"/>
    <property type="evidence" value="ECO:0000314"/>
    <property type="project" value="RGD"/>
</dbReference>
<dbReference type="GO" id="GO:0070006">
    <property type="term" value="F:metalloaminopeptidase activity"/>
    <property type="evidence" value="ECO:0000318"/>
    <property type="project" value="GO_Central"/>
</dbReference>
<dbReference type="GO" id="GO:0008237">
    <property type="term" value="F:metallopeptidase activity"/>
    <property type="evidence" value="ECO:0000266"/>
    <property type="project" value="RGD"/>
</dbReference>
<dbReference type="GO" id="GO:0042277">
    <property type="term" value="F:peptide binding"/>
    <property type="evidence" value="ECO:0000314"/>
    <property type="project" value="RGD"/>
</dbReference>
<dbReference type="GO" id="GO:0008270">
    <property type="term" value="F:zinc ion binding"/>
    <property type="evidence" value="ECO:0000318"/>
    <property type="project" value="GO_Central"/>
</dbReference>
<dbReference type="GO" id="GO:0001525">
    <property type="term" value="P:angiogenesis"/>
    <property type="evidence" value="ECO:0007669"/>
    <property type="project" value="UniProtKB-KW"/>
</dbReference>
<dbReference type="GO" id="GO:0002003">
    <property type="term" value="P:angiotensin maturation"/>
    <property type="evidence" value="ECO:0000266"/>
    <property type="project" value="RGD"/>
</dbReference>
<dbReference type="GO" id="GO:0030154">
    <property type="term" value="P:cell differentiation"/>
    <property type="evidence" value="ECO:0007669"/>
    <property type="project" value="UniProtKB-KW"/>
</dbReference>
<dbReference type="GO" id="GO:0072237">
    <property type="term" value="P:metanephric proximal tubule development"/>
    <property type="evidence" value="ECO:0000270"/>
    <property type="project" value="RGD"/>
</dbReference>
<dbReference type="GO" id="GO:0043171">
    <property type="term" value="P:peptide catabolic process"/>
    <property type="evidence" value="ECO:0000315"/>
    <property type="project" value="RGD"/>
</dbReference>
<dbReference type="GO" id="GO:0016485">
    <property type="term" value="P:protein processing"/>
    <property type="evidence" value="ECO:0000314"/>
    <property type="project" value="RGD"/>
</dbReference>
<dbReference type="GO" id="GO:0006508">
    <property type="term" value="P:proteolysis"/>
    <property type="evidence" value="ECO:0000318"/>
    <property type="project" value="GO_Central"/>
</dbReference>
<dbReference type="CDD" id="cd09601">
    <property type="entry name" value="M1_APN-Q_like"/>
    <property type="match status" value="1"/>
</dbReference>
<dbReference type="FunFam" id="2.60.40.1910:FF:000005">
    <property type="entry name" value="Aminopeptidase"/>
    <property type="match status" value="1"/>
</dbReference>
<dbReference type="FunFam" id="1.25.50.20:FF:000012">
    <property type="entry name" value="Aminopeptidase N"/>
    <property type="match status" value="1"/>
</dbReference>
<dbReference type="FunFam" id="2.60.40.1730:FF:000012">
    <property type="entry name" value="Aminopeptidase N"/>
    <property type="match status" value="1"/>
</dbReference>
<dbReference type="FunFam" id="1.10.390.10:FF:000016">
    <property type="entry name" value="Glutamyl aminopeptidase"/>
    <property type="match status" value="1"/>
</dbReference>
<dbReference type="Gene3D" id="1.25.50.20">
    <property type="match status" value="1"/>
</dbReference>
<dbReference type="Gene3D" id="2.60.40.1910">
    <property type="match status" value="1"/>
</dbReference>
<dbReference type="Gene3D" id="1.10.390.10">
    <property type="entry name" value="Neutral Protease Domain 2"/>
    <property type="match status" value="1"/>
</dbReference>
<dbReference type="Gene3D" id="2.60.40.1730">
    <property type="entry name" value="tricorn interacting facor f3 domain"/>
    <property type="match status" value="1"/>
</dbReference>
<dbReference type="InterPro" id="IPR045357">
    <property type="entry name" value="Aminopeptidase_N-like_N"/>
</dbReference>
<dbReference type="InterPro" id="IPR042097">
    <property type="entry name" value="Aminopeptidase_N-like_N_sf"/>
</dbReference>
<dbReference type="InterPro" id="IPR024571">
    <property type="entry name" value="ERAP1-like_C_dom"/>
</dbReference>
<dbReference type="InterPro" id="IPR034016">
    <property type="entry name" value="M1_APN-typ"/>
</dbReference>
<dbReference type="InterPro" id="IPR001930">
    <property type="entry name" value="Peptidase_M1"/>
</dbReference>
<dbReference type="InterPro" id="IPR050344">
    <property type="entry name" value="Peptidase_M1_aminopeptidases"/>
</dbReference>
<dbReference type="InterPro" id="IPR014782">
    <property type="entry name" value="Peptidase_M1_dom"/>
</dbReference>
<dbReference type="InterPro" id="IPR027268">
    <property type="entry name" value="Peptidase_M4/M1_CTD_sf"/>
</dbReference>
<dbReference type="PANTHER" id="PTHR11533:SF172">
    <property type="entry name" value="AMINOPEPTIDASE N"/>
    <property type="match status" value="1"/>
</dbReference>
<dbReference type="PANTHER" id="PTHR11533">
    <property type="entry name" value="PROTEASE M1 ZINC METALLOPROTEASE"/>
    <property type="match status" value="1"/>
</dbReference>
<dbReference type="Pfam" id="PF11838">
    <property type="entry name" value="ERAP1_C"/>
    <property type="match status" value="1"/>
</dbReference>
<dbReference type="Pfam" id="PF01433">
    <property type="entry name" value="Peptidase_M1"/>
    <property type="match status" value="1"/>
</dbReference>
<dbReference type="Pfam" id="PF17900">
    <property type="entry name" value="Peptidase_M1_N"/>
    <property type="match status" value="1"/>
</dbReference>
<dbReference type="PRINTS" id="PR00756">
    <property type="entry name" value="ALADIPTASE"/>
</dbReference>
<dbReference type="SUPFAM" id="SSF63737">
    <property type="entry name" value="Leukotriene A4 hydrolase N-terminal domain"/>
    <property type="match status" value="1"/>
</dbReference>
<dbReference type="SUPFAM" id="SSF55486">
    <property type="entry name" value="Metalloproteases ('zincins'), catalytic domain"/>
    <property type="match status" value="1"/>
</dbReference>
<dbReference type="PROSITE" id="PS00142">
    <property type="entry name" value="ZINC_PROTEASE"/>
    <property type="match status" value="1"/>
</dbReference>
<gene>
    <name type="primary">Anpep</name>
</gene>
<proteinExistence type="evidence at protein level"/>
<evidence type="ECO:0000250" key="1">
    <source>
        <dbReference type="UniProtKB" id="P15144"/>
    </source>
</evidence>
<evidence type="ECO:0000250" key="2">
    <source>
        <dbReference type="UniProtKB" id="P15145"/>
    </source>
</evidence>
<evidence type="ECO:0000250" key="3">
    <source>
        <dbReference type="UniProtKB" id="P97449"/>
    </source>
</evidence>
<evidence type="ECO:0000255" key="4"/>
<evidence type="ECO:0000255" key="5">
    <source>
        <dbReference type="PROSITE-ProRule" id="PRU10095"/>
    </source>
</evidence>
<evidence type="ECO:0000256" key="6">
    <source>
        <dbReference type="SAM" id="MobiDB-lite"/>
    </source>
</evidence>
<evidence type="ECO:0000269" key="7">
    <source>
    </source>
</evidence>
<evidence type="ECO:0000269" key="8">
    <source>
    </source>
</evidence>
<evidence type="ECO:0000269" key="9">
    <source>
    </source>
</evidence>
<evidence type="ECO:0000305" key="10"/>
<name>AMPN_RAT</name>
<keyword id="KW-0031">Aminopeptidase</keyword>
<keyword id="KW-0037">Angiogenesis</keyword>
<keyword id="KW-1003">Cell membrane</keyword>
<keyword id="KW-0217">Developmental protein</keyword>
<keyword id="KW-0221">Differentiation</keyword>
<keyword id="KW-0903">Direct protein sequencing</keyword>
<keyword id="KW-1015">Disulfide bond</keyword>
<keyword id="KW-0325">Glycoprotein</keyword>
<keyword id="KW-0378">Hydrolase</keyword>
<keyword id="KW-0472">Membrane</keyword>
<keyword id="KW-0479">Metal-binding</keyword>
<keyword id="KW-0482">Metalloprotease</keyword>
<keyword id="KW-0597">Phosphoprotein</keyword>
<keyword id="KW-0645">Protease</keyword>
<keyword id="KW-1185">Reference proteome</keyword>
<keyword id="KW-0735">Signal-anchor</keyword>
<keyword id="KW-0765">Sulfation</keyword>
<keyword id="KW-0812">Transmembrane</keyword>
<keyword id="KW-1133">Transmembrane helix</keyword>
<keyword id="KW-0862">Zinc</keyword>
<feature type="initiator methionine" description="Removed" evidence="8">
    <location>
        <position position="1"/>
    </location>
</feature>
<feature type="chain" id="PRO_0000095085" description="Aminopeptidase N">
    <location>
        <begin position="2"/>
        <end position="965"/>
    </location>
</feature>
<feature type="topological domain" description="Cytoplasmic" evidence="1">
    <location>
        <begin position="2"/>
        <end position="8"/>
    </location>
</feature>
<feature type="transmembrane region" description="Helical; Signal-anchor for type II membrane protein" evidence="4">
    <location>
        <begin position="9"/>
        <end position="32"/>
    </location>
</feature>
<feature type="topological domain" description="Extracellular" evidence="1">
    <location>
        <begin position="33"/>
        <end position="965"/>
    </location>
</feature>
<feature type="region of interest" description="Cytosolic Ser/Thr-rich junction">
    <location>
        <begin position="33"/>
        <end position="68"/>
    </location>
</feature>
<feature type="region of interest" description="Disordered" evidence="6">
    <location>
        <begin position="44"/>
        <end position="68"/>
    </location>
</feature>
<feature type="region of interest" description="Metalloprotease">
    <location>
        <begin position="69"/>
        <end position="965"/>
    </location>
</feature>
<feature type="compositionally biased region" description="Low complexity" evidence="6">
    <location>
        <begin position="47"/>
        <end position="64"/>
    </location>
</feature>
<feature type="active site" description="Proton acceptor" evidence="5">
    <location>
        <position position="388"/>
    </location>
</feature>
<feature type="binding site" evidence="1">
    <location>
        <begin position="351"/>
        <end position="355"/>
    </location>
    <ligand>
        <name>substrate</name>
    </ligand>
</feature>
<feature type="binding site" evidence="5">
    <location>
        <position position="387"/>
    </location>
    <ligand>
        <name>Zn(2+)</name>
        <dbReference type="ChEBI" id="CHEBI:29105"/>
        <note>catalytic</note>
    </ligand>
</feature>
<feature type="binding site" evidence="5">
    <location>
        <position position="391"/>
    </location>
    <ligand>
        <name>Zn(2+)</name>
        <dbReference type="ChEBI" id="CHEBI:29105"/>
        <note>catalytic</note>
    </ligand>
</feature>
<feature type="binding site" evidence="5">
    <location>
        <position position="410"/>
    </location>
    <ligand>
        <name>Zn(2+)</name>
        <dbReference type="ChEBI" id="CHEBI:29105"/>
        <note>catalytic</note>
    </ligand>
</feature>
<feature type="site" description="Transition state stabilizer" evidence="1">
    <location>
        <position position="476"/>
    </location>
</feature>
<feature type="modified residue" description="Sulfotyrosine" evidence="4">
    <location>
        <position position="176"/>
    </location>
</feature>
<feature type="modified residue" description="Phosphotyrosine" evidence="3">
    <location>
        <position position="852"/>
    </location>
</feature>
<feature type="glycosylation site" description="N-linked (GlcNAc...) asparagine" evidence="4">
    <location>
        <position position="114"/>
    </location>
</feature>
<feature type="glycosylation site" description="N-linked (GlcNAc...) asparagine" evidence="4">
    <location>
        <position position="128"/>
    </location>
</feature>
<feature type="glycosylation site" description="N-linked (GlcNAc...) asparagine" evidence="4">
    <location>
        <position position="234"/>
    </location>
</feature>
<feature type="glycosylation site" description="N-linked (GlcNAc...) asparagine" evidence="4">
    <location>
        <position position="242"/>
    </location>
</feature>
<feature type="glycosylation site" description="N-linked (GlcNAc...) asparagine" evidence="4">
    <location>
        <position position="264"/>
    </location>
</feature>
<feature type="glycosylation site" description="N-linked (GlcNAc...) asparagine" evidence="4">
    <location>
        <position position="555"/>
    </location>
</feature>
<feature type="glycosylation site" description="N-linked (GlcNAc...) asparagine" evidence="4">
    <location>
        <position position="606"/>
    </location>
</feature>
<feature type="glycosylation site" description="N-linked (GlcNAc...) asparagine" evidence="4">
    <location>
        <position position="624"/>
    </location>
</feature>
<feature type="glycosylation site" description="N-linked (GlcNAc...) asparagine" evidence="4">
    <location>
        <position position="780"/>
    </location>
</feature>
<feature type="disulfide bond" evidence="1">
    <location>
        <begin position="760"/>
        <end position="767"/>
    </location>
</feature>
<feature type="disulfide bond" evidence="1">
    <location>
        <begin position="797"/>
        <end position="833"/>
    </location>
</feature>
<feature type="sequence conflict" description="In Ref. 3; CAB93958." evidence="10" ref="3">
    <original>T</original>
    <variation>A</variation>
    <location>
        <position position="558"/>
    </location>
</feature>
<feature type="sequence conflict" description="In Ref. 3; CAB93958." evidence="10" ref="3">
    <original>Y</original>
    <variation>L</variation>
    <location>
        <position position="582"/>
    </location>
</feature>
<feature type="sequence conflict" description="In Ref. 3; CAB93958." evidence="10" ref="3">
    <original>YLKNGKEDH</original>
    <variation>VSQKWKGGS</variation>
    <location>
        <begin position="590"/>
        <end position="598"/>
    </location>
</feature>
<feature type="sequence conflict" description="In Ref. 2." evidence="10" ref="2">
    <original>FGG</original>
    <variation>SC</variation>
    <location>
        <begin position="802"/>
        <end position="804"/>
    </location>
</feature>
<feature type="sequence conflict" description="In Ref. 2." evidence="10" ref="2">
    <original>E</original>
    <variation>A</variation>
    <location>
        <position position="807"/>
    </location>
</feature>
<feature type="sequence conflict" description="In Ref. 2; AAA57129." evidence="10" ref="2">
    <original>EQFRKA</original>
    <variation>ATVPER</variation>
    <location>
        <begin position="813"/>
        <end position="818"/>
    </location>
</feature>
<feature type="sequence conflict" description="In Ref. 2; AAA57129." evidence="10" ref="2">
    <original>LAC</original>
    <variation>VGR</variation>
    <location>
        <begin position="831"/>
        <end position="833"/>
    </location>
</feature>
<sequence length="965" mass="109449">MAKGFYISKTLGILGILLGVAAVCTIIALSVVYAQEKNRNAENSAIAPTLPGSTSATTSTTNPAIDESKPWNQYRLPKTLIPDSYQVTLRPYLTPNEQGLYIFKGSSTVRFTCNETTNVIIIHSKKLNYTNKGNHRVALRALGDTPAPNIDTTELVERTEYLVVHLQGSLVKGHQYEMDSEFQGELADDLAGFYRSEYMEGGNKKVVATTQMQAADARKSFPCFDEPAMKASFNITLIHPNNLTALSNMLPKDSRTLQEDPSWNVTEFHPTPKMSTYLLAYIVSEFKYVEAVSPNRVQIRIWARPSAIDEGHGDYALQVTGPILNFFAQHYNTAYPLEKSDQIALPDFNAGAMENWGLVTYRESALVFDPQSSSISNKERVVTVIAHELAHQWFGNLVTVDWWNDLWLNEGFASYVEFLGADYAEPTWNLKDLIVLNDVYRVMAVDALASSHPLSSPANEVNTPAQISELFDSITYSKGASVLRMLSSFLTEDLFKKGLSSYLHTFQYSNTIYLDLWEHLQQAVDSQTAIKLPASVSTIMDRWILQMGFPVITVNTSTGEIYQEHFLLDPTSKPTRPSDFNYLWIVPIPYLKNGKEDHYWLETEKNQSAEFQTSSNEWLLLNINVTGYYQVNYDENNWRKIQNQLQTDLSVIPVINRAQIIHDSFNLASAGKLSITLPLSNTLFLASETEYMPWEAALSSLNYFKLMFDRSEVYGPMKRYLKKQVTPLFAYFKIKTNNWLDRPPTLMEQYNEINAISTACSSGLEECRDLVVGLYSQWMNNSDNNPIHPNLRSTVYCNAIAFGGEEEWNFAWEQFRKATLVNEADKLRSALACSNEVWILNRYLSYTLNPDYIRKQDATSTIVSIANNVVGQTLVWDFVRSNWKKLFEDYGGGSFSFANLIQGVTRRFSSEFELQQLEQFKEDNSATGFGSGTRALEQALEKTKANIKWVKENKDVVLKWFTENS</sequence>
<comment type="function">
    <text evidence="1 3">Broad specificity aminopeptidase which plays a role in the final digestion of peptides generated from hydrolysis of proteins by gastric and pancreatic proteases. Also involved in the processing of various peptides including peptide hormones, such as angiotensin III and IV, neuropeptides, and chemokines. May also be involved the cleavage of peptides bound to major histocompatibility complex class II molecules of antigen presenting cells. May have a role in angiogenesis and promote cholesterol crystallization. May have a role in amino acid transport by acting as binding partner of amino acid transporter SLC6A19 and regulating its activity (By similarity).</text>
</comment>
<comment type="catalytic activity">
    <reaction evidence="1">
        <text>Release of an N-terminal amino acid, Xaa-|-Yaa- from a peptide, amide or arylamide. Xaa is preferably Ala, but may be most amino acids including Pro (slow action). When a terminal hydrophobic residue is followed by a prolyl residue, the two may be released as an intact Xaa-Pro dipeptide.</text>
        <dbReference type="EC" id="3.4.11.2"/>
    </reaction>
</comment>
<comment type="cofactor">
    <cofactor evidence="1">
        <name>Zn(2+)</name>
        <dbReference type="ChEBI" id="CHEBI:29105"/>
    </cofactor>
    <text evidence="1">Binds 1 zinc ion per subunit.</text>
</comment>
<comment type="subunit">
    <text evidence="1 3">Homodimer. Interacts with SLC6A19 (By similarity).</text>
</comment>
<comment type="subcellular location">
    <subcellularLocation>
        <location evidence="9">Cell membrane</location>
        <topology evidence="1">Single-pass type II membrane protein</topology>
    </subcellularLocation>
    <text evidence="1">Also found as a soluble form.</text>
</comment>
<comment type="tissue specificity">
    <text evidence="7 9">Widely distributed throughout the CNS. Particularly abundant in kidney and intestinal microvilli, also detected in lung and liver. Weakly expressed in heart and aorta.</text>
</comment>
<comment type="PTM">
    <text evidence="2">Sulfated.</text>
</comment>
<comment type="PTM">
    <text evidence="1">N- and O-glycosylated.</text>
</comment>
<comment type="PTM">
    <text evidence="1">May undergo proteolysis and give rise to a soluble form.</text>
</comment>
<comment type="similarity">
    <text evidence="10">Belongs to the peptidase M1 family.</text>
</comment>
<protein>
    <recommendedName>
        <fullName evidence="10">Aminopeptidase N</fullName>
        <shortName>AP-N</shortName>
        <shortName>rAPN</shortName>
        <ecNumber evidence="1">3.4.11.2</ecNumber>
    </recommendedName>
    <alternativeName>
        <fullName>Alanyl aminopeptidase</fullName>
    </alternativeName>
    <alternativeName>
        <fullName>Aminopeptidase M</fullName>
        <shortName>AP-M</shortName>
    </alternativeName>
    <alternativeName>
        <fullName>Kidney Zn peptidase</fullName>
        <shortName>KZP</shortName>
    </alternativeName>
    <alternativeName>
        <fullName>Microsomal aminopeptidase</fullName>
    </alternativeName>
    <cdAntigenName>CD13</cdAntigenName>
</protein>